<proteinExistence type="inferred from homology"/>
<feature type="chain" id="PRO_1000166648" description="NADH-quinone oxidoreductase subunit B">
    <location>
        <begin position="1"/>
        <end position="172"/>
    </location>
</feature>
<feature type="binding site" evidence="1">
    <location>
        <position position="46"/>
    </location>
    <ligand>
        <name>[4Fe-4S] cluster</name>
        <dbReference type="ChEBI" id="CHEBI:49883"/>
    </ligand>
</feature>
<feature type="binding site" evidence="1">
    <location>
        <position position="47"/>
    </location>
    <ligand>
        <name>[4Fe-4S] cluster</name>
        <dbReference type="ChEBI" id="CHEBI:49883"/>
    </ligand>
</feature>
<feature type="binding site" evidence="1">
    <location>
        <position position="111"/>
    </location>
    <ligand>
        <name>[4Fe-4S] cluster</name>
        <dbReference type="ChEBI" id="CHEBI:49883"/>
    </ligand>
</feature>
<feature type="binding site" evidence="1">
    <location>
        <position position="141"/>
    </location>
    <ligand>
        <name>[4Fe-4S] cluster</name>
        <dbReference type="ChEBI" id="CHEBI:49883"/>
    </ligand>
</feature>
<gene>
    <name evidence="1" type="primary">nuoB</name>
    <name type="ordered locus">BAA_5569</name>
</gene>
<reference key="1">
    <citation type="submission" date="2009-04" db="EMBL/GenBank/DDBJ databases">
        <title>Genome sequence of Bacillus anthracis A0248.</title>
        <authorList>
            <person name="Dodson R.J."/>
            <person name="Munk A.C."/>
            <person name="Bruce D."/>
            <person name="Detter C."/>
            <person name="Tapia R."/>
            <person name="Sutton G."/>
            <person name="Sims D."/>
            <person name="Brettin T."/>
        </authorList>
    </citation>
    <scope>NUCLEOTIDE SEQUENCE [LARGE SCALE GENOMIC DNA]</scope>
    <source>
        <strain>A0248</strain>
    </source>
</reference>
<sequence length="172" mass="19226">MVINFEELHPNERAELERNIFFSTLEQLKGWARSNSLWPMTFGLACCAIEMMGVGSSHYDLDRFGSFFRTSPRQSDVMIVSGTVTKKMAPIVRRLYDQMPEPKWVIAMGSCATAGGPYVNSYAVVKGVDQIVPVDVYIPGCPPNPAALIYGINKLKEKIRYEAKTGKQVTNK</sequence>
<protein>
    <recommendedName>
        <fullName evidence="1">NADH-quinone oxidoreductase subunit B</fullName>
        <ecNumber evidence="1">7.1.1.-</ecNumber>
    </recommendedName>
    <alternativeName>
        <fullName evidence="1">NADH dehydrogenase I subunit B</fullName>
    </alternativeName>
    <alternativeName>
        <fullName evidence="1">NDH-1 subunit B</fullName>
    </alternativeName>
</protein>
<name>NUOB_BACAA</name>
<keyword id="KW-0004">4Fe-4S</keyword>
<keyword id="KW-1003">Cell membrane</keyword>
<keyword id="KW-0408">Iron</keyword>
<keyword id="KW-0411">Iron-sulfur</keyword>
<keyword id="KW-0472">Membrane</keyword>
<keyword id="KW-0479">Metal-binding</keyword>
<keyword id="KW-0520">NAD</keyword>
<keyword id="KW-0874">Quinone</keyword>
<keyword id="KW-1278">Translocase</keyword>
<keyword id="KW-0813">Transport</keyword>
<comment type="function">
    <text evidence="1">NDH-1 shuttles electrons from NADH, via FMN and iron-sulfur (Fe-S) centers, to quinones in the respiratory chain. The immediate electron acceptor for the enzyme in this species is believed to be a menaquinone. Couples the redox reaction to proton translocation (for every two electrons transferred, four hydrogen ions are translocated across the cytoplasmic membrane), and thus conserves the redox energy in a proton gradient.</text>
</comment>
<comment type="catalytic activity">
    <reaction evidence="1">
        <text>a quinone + NADH + 5 H(+)(in) = a quinol + NAD(+) + 4 H(+)(out)</text>
        <dbReference type="Rhea" id="RHEA:57888"/>
        <dbReference type="ChEBI" id="CHEBI:15378"/>
        <dbReference type="ChEBI" id="CHEBI:24646"/>
        <dbReference type="ChEBI" id="CHEBI:57540"/>
        <dbReference type="ChEBI" id="CHEBI:57945"/>
        <dbReference type="ChEBI" id="CHEBI:132124"/>
    </reaction>
</comment>
<comment type="cofactor">
    <cofactor evidence="1">
        <name>[4Fe-4S] cluster</name>
        <dbReference type="ChEBI" id="CHEBI:49883"/>
    </cofactor>
    <text evidence="1">Binds 1 [4Fe-4S] cluster.</text>
</comment>
<comment type="subunit">
    <text evidence="1">NDH-1 is composed of 14 different subunits. Subunits NuoB, C, D, E, F, and G constitute the peripheral sector of the complex.</text>
</comment>
<comment type="subcellular location">
    <subcellularLocation>
        <location evidence="1">Cell membrane</location>
        <topology evidence="1">Peripheral membrane protein</topology>
        <orientation evidence="1">Cytoplasmic side</orientation>
    </subcellularLocation>
</comment>
<comment type="similarity">
    <text evidence="1">Belongs to the complex I 20 kDa subunit family.</text>
</comment>
<accession>C3P1E8</accession>
<evidence type="ECO:0000255" key="1">
    <source>
        <dbReference type="HAMAP-Rule" id="MF_01356"/>
    </source>
</evidence>
<organism>
    <name type="scientific">Bacillus anthracis (strain A0248)</name>
    <dbReference type="NCBI Taxonomy" id="592021"/>
    <lineage>
        <taxon>Bacteria</taxon>
        <taxon>Bacillati</taxon>
        <taxon>Bacillota</taxon>
        <taxon>Bacilli</taxon>
        <taxon>Bacillales</taxon>
        <taxon>Bacillaceae</taxon>
        <taxon>Bacillus</taxon>
        <taxon>Bacillus cereus group</taxon>
    </lineage>
</organism>
<dbReference type="EC" id="7.1.1.-" evidence="1"/>
<dbReference type="EMBL" id="CP001598">
    <property type="protein sequence ID" value="ACQ47969.1"/>
    <property type="molecule type" value="Genomic_DNA"/>
</dbReference>
<dbReference type="RefSeq" id="WP_000236331.1">
    <property type="nucleotide sequence ID" value="NC_012659.1"/>
</dbReference>
<dbReference type="SMR" id="C3P1E8"/>
<dbReference type="GeneID" id="92803556"/>
<dbReference type="KEGG" id="bai:BAA_5569"/>
<dbReference type="HOGENOM" id="CLU_055737_7_3_9"/>
<dbReference type="GO" id="GO:0005886">
    <property type="term" value="C:plasma membrane"/>
    <property type="evidence" value="ECO:0007669"/>
    <property type="project" value="UniProtKB-SubCell"/>
</dbReference>
<dbReference type="GO" id="GO:0045271">
    <property type="term" value="C:respiratory chain complex I"/>
    <property type="evidence" value="ECO:0007669"/>
    <property type="project" value="TreeGrafter"/>
</dbReference>
<dbReference type="GO" id="GO:0051539">
    <property type="term" value="F:4 iron, 4 sulfur cluster binding"/>
    <property type="evidence" value="ECO:0007669"/>
    <property type="project" value="UniProtKB-KW"/>
</dbReference>
<dbReference type="GO" id="GO:0005506">
    <property type="term" value="F:iron ion binding"/>
    <property type="evidence" value="ECO:0007669"/>
    <property type="project" value="UniProtKB-UniRule"/>
</dbReference>
<dbReference type="GO" id="GO:0008137">
    <property type="term" value="F:NADH dehydrogenase (ubiquinone) activity"/>
    <property type="evidence" value="ECO:0007669"/>
    <property type="project" value="InterPro"/>
</dbReference>
<dbReference type="GO" id="GO:0050136">
    <property type="term" value="F:NADH:ubiquinone reductase (non-electrogenic) activity"/>
    <property type="evidence" value="ECO:0007669"/>
    <property type="project" value="UniProtKB-UniRule"/>
</dbReference>
<dbReference type="GO" id="GO:0048038">
    <property type="term" value="F:quinone binding"/>
    <property type="evidence" value="ECO:0007669"/>
    <property type="project" value="UniProtKB-KW"/>
</dbReference>
<dbReference type="GO" id="GO:0009060">
    <property type="term" value="P:aerobic respiration"/>
    <property type="evidence" value="ECO:0007669"/>
    <property type="project" value="TreeGrafter"/>
</dbReference>
<dbReference type="GO" id="GO:0015990">
    <property type="term" value="P:electron transport coupled proton transport"/>
    <property type="evidence" value="ECO:0007669"/>
    <property type="project" value="TreeGrafter"/>
</dbReference>
<dbReference type="FunFam" id="3.40.50.12280:FF:000002">
    <property type="entry name" value="NADH-quinone oxidoreductase subunit B"/>
    <property type="match status" value="1"/>
</dbReference>
<dbReference type="Gene3D" id="3.40.50.12280">
    <property type="match status" value="1"/>
</dbReference>
<dbReference type="HAMAP" id="MF_01356">
    <property type="entry name" value="NDH1_NuoB"/>
    <property type="match status" value="1"/>
</dbReference>
<dbReference type="InterPro" id="IPR006137">
    <property type="entry name" value="NADH_UbQ_OxRdtase-like_20kDa"/>
</dbReference>
<dbReference type="InterPro" id="IPR006138">
    <property type="entry name" value="NADH_UQ_OxRdtase_20Kd_su"/>
</dbReference>
<dbReference type="NCBIfam" id="TIGR01957">
    <property type="entry name" value="nuoB_fam"/>
    <property type="match status" value="1"/>
</dbReference>
<dbReference type="NCBIfam" id="NF005012">
    <property type="entry name" value="PRK06411.1"/>
    <property type="match status" value="1"/>
</dbReference>
<dbReference type="PANTHER" id="PTHR11995">
    <property type="entry name" value="NADH DEHYDROGENASE"/>
    <property type="match status" value="1"/>
</dbReference>
<dbReference type="PANTHER" id="PTHR11995:SF14">
    <property type="entry name" value="NADH DEHYDROGENASE [UBIQUINONE] IRON-SULFUR PROTEIN 7, MITOCHONDRIAL"/>
    <property type="match status" value="1"/>
</dbReference>
<dbReference type="Pfam" id="PF01058">
    <property type="entry name" value="Oxidored_q6"/>
    <property type="match status" value="1"/>
</dbReference>
<dbReference type="SUPFAM" id="SSF56770">
    <property type="entry name" value="HydA/Nqo6-like"/>
    <property type="match status" value="1"/>
</dbReference>